<gene>
    <name type="primary">Mrgpre</name>
    <name type="synonym">Mrge</name>
</gene>
<feature type="chain" id="PRO_0000069763" description="Mas-related G-protein coupled receptor member E">
    <location>
        <begin position="1"/>
        <end position="309"/>
    </location>
</feature>
<feature type="topological domain" description="Extracellular" evidence="1">
    <location>
        <begin position="1"/>
        <end position="21"/>
    </location>
</feature>
<feature type="transmembrane region" description="Helical; Name=1" evidence="1">
    <location>
        <begin position="22"/>
        <end position="42"/>
    </location>
</feature>
<feature type="topological domain" description="Cytoplasmic" evidence="1">
    <location>
        <begin position="43"/>
        <end position="59"/>
    </location>
</feature>
<feature type="transmembrane region" description="Helical; Name=2" evidence="1">
    <location>
        <begin position="60"/>
        <end position="80"/>
    </location>
</feature>
<feature type="topological domain" description="Extracellular" evidence="1">
    <location>
        <begin position="81"/>
        <end position="91"/>
    </location>
</feature>
<feature type="transmembrane region" description="Helical; Name=3" evidence="1">
    <location>
        <begin position="92"/>
        <end position="112"/>
    </location>
</feature>
<feature type="topological domain" description="Cytoplasmic" evidence="1">
    <location>
        <begin position="113"/>
        <end position="132"/>
    </location>
</feature>
<feature type="transmembrane region" description="Helical; Name=4" evidence="1">
    <location>
        <begin position="133"/>
        <end position="153"/>
    </location>
</feature>
<feature type="topological domain" description="Extracellular" evidence="1">
    <location>
        <begin position="154"/>
        <end position="168"/>
    </location>
</feature>
<feature type="transmembrane region" description="Helical; Name=5" evidence="1">
    <location>
        <begin position="169"/>
        <end position="189"/>
    </location>
</feature>
<feature type="topological domain" description="Cytoplasmic" evidence="1">
    <location>
        <begin position="190"/>
        <end position="212"/>
    </location>
</feature>
<feature type="transmembrane region" description="Helical; Name=6" evidence="1">
    <location>
        <begin position="213"/>
        <end position="233"/>
    </location>
</feature>
<feature type="topological domain" description="Extracellular" evidence="1">
    <location>
        <begin position="234"/>
        <end position="247"/>
    </location>
</feature>
<feature type="transmembrane region" description="Helical; Name=7" evidence="1">
    <location>
        <begin position="248"/>
        <end position="268"/>
    </location>
</feature>
<feature type="topological domain" description="Cytoplasmic" evidence="1">
    <location>
        <begin position="269"/>
        <end position="309"/>
    </location>
</feature>
<feature type="glycosylation site" description="N-linked (GlcNAc...) asparagine" evidence="1">
    <location>
        <position position="19"/>
    </location>
</feature>
<feature type="glycosylation site" description="N-linked (GlcNAc...) asparagine" evidence="1">
    <location>
        <position position="236"/>
    </location>
</feature>
<reference key="1">
    <citation type="journal article" date="2003" name="Proc. Natl. Acad. Sci. U.S.A.">
        <title>Atypical expansion in mice of the sensory neuron-specific Mrg G protein-coupled receptor family.</title>
        <authorList>
            <person name="Zylka M.J."/>
            <person name="Dong X."/>
            <person name="Southwell A.L."/>
            <person name="Anderson D.J."/>
        </authorList>
    </citation>
    <scope>NUCLEOTIDE SEQUENCE [GENOMIC DNA]</scope>
    <source>
        <strain>Sprague-Dawley</strain>
    </source>
</reference>
<comment type="function">
    <text>Orphan receptor. May regulate nociceptor function and/or development, including the sensation or modulation of pain.</text>
</comment>
<comment type="subcellular location">
    <subcellularLocation>
        <location>Cell membrane</location>
        <topology>Multi-pass membrane protein</topology>
    </subcellularLocation>
</comment>
<comment type="similarity">
    <text evidence="2">Belongs to the G-protein coupled receptor 1 family. Mas subfamily.</text>
</comment>
<protein>
    <recommendedName>
        <fullName>Mas-related G-protein coupled receptor member E</fullName>
    </recommendedName>
</protein>
<accession>Q7TN40</accession>
<sequence>MSLRVHTHSPSTQGDMAFNLTILSLTELLSLGGLLGNGVALWLLNQNVYRNPFSIYLLDVACADLIFLCCHMVAIIPELLQDQLNFPEFVHISLIMLRFFCYIVGLSLLVAISTEQCLATLFPSGYLCRRPRYLTTCVCAFIWVLCLLLDLLLSGACTQFFGAPSYHLCGMLWLVVAVLLAALCCTMCVTSLLLLLRVERGPERHQPRGFPTLVLLVILLFLFCGLPFGIFWLSKNLSWHTPLYFYHFSFFMASVHSAAKPAIYFFLGSTPGQRFQEPLRLVLQRALGDEAELGAVREASQGGLVDMTV</sequence>
<name>MRGRE_RAT</name>
<dbReference type="EMBL" id="AF518247">
    <property type="protein sequence ID" value="AAQ08319.1"/>
    <property type="molecule type" value="Genomic_DNA"/>
</dbReference>
<dbReference type="RefSeq" id="NP_001002288.1">
    <property type="nucleotide sequence ID" value="NM_001002288.2"/>
</dbReference>
<dbReference type="RefSeq" id="XP_006230932.1">
    <property type="nucleotide sequence ID" value="XM_006230870.5"/>
</dbReference>
<dbReference type="RefSeq" id="XP_006230934.1">
    <property type="nucleotide sequence ID" value="XM_006230872.3"/>
</dbReference>
<dbReference type="RefSeq" id="XP_008758385.1">
    <property type="nucleotide sequence ID" value="XM_008760163.4"/>
</dbReference>
<dbReference type="RefSeq" id="XP_017445008.1">
    <property type="nucleotide sequence ID" value="XM_017589519.1"/>
</dbReference>
<dbReference type="RefSeq" id="XP_017445009.1">
    <property type="nucleotide sequence ID" value="XM_017589520.1"/>
</dbReference>
<dbReference type="SMR" id="Q7TN40"/>
<dbReference type="STRING" id="10116.ENSRNOP00000070110"/>
<dbReference type="GlyCosmos" id="Q7TN40">
    <property type="glycosylation" value="2 sites, No reported glycans"/>
</dbReference>
<dbReference type="GlyGen" id="Q7TN40">
    <property type="glycosylation" value="2 sites"/>
</dbReference>
<dbReference type="iPTMnet" id="Q7TN40"/>
<dbReference type="PhosphoSitePlus" id="Q7TN40"/>
<dbReference type="Ensembl" id="ENSRNOT00000094719.1">
    <property type="protein sequence ID" value="ENSRNOP00000093679.1"/>
    <property type="gene ID" value="ENSRNOG00000065330.1"/>
</dbReference>
<dbReference type="Ensembl" id="ENSRNOT00000109796.1">
    <property type="protein sequence ID" value="ENSRNOP00000079771.1"/>
    <property type="gene ID" value="ENSRNOG00000065330.1"/>
</dbReference>
<dbReference type="Ensembl" id="ENSRNOT00000115771.1">
    <property type="protein sequence ID" value="ENSRNOP00000089804.1"/>
    <property type="gene ID" value="ENSRNOG00000065330.1"/>
</dbReference>
<dbReference type="GeneID" id="404660"/>
<dbReference type="KEGG" id="rno:404660"/>
<dbReference type="UCSC" id="RGD:738045">
    <property type="organism name" value="rat"/>
</dbReference>
<dbReference type="AGR" id="RGD:738045"/>
<dbReference type="CTD" id="116534"/>
<dbReference type="RGD" id="738045">
    <property type="gene designation" value="Mrgpre"/>
</dbReference>
<dbReference type="GeneTree" id="ENSGT01030000234639"/>
<dbReference type="HOGENOM" id="CLU_009579_4_1_1"/>
<dbReference type="InParanoid" id="Q7TN40"/>
<dbReference type="OMA" id="GCHMVAI"/>
<dbReference type="OrthoDB" id="9896011at2759"/>
<dbReference type="PhylomeDB" id="Q7TN40"/>
<dbReference type="TreeFam" id="TF336336"/>
<dbReference type="PRO" id="PR:Q7TN40"/>
<dbReference type="Proteomes" id="UP000002494">
    <property type="component" value="Chromosome 1"/>
</dbReference>
<dbReference type="Bgee" id="ENSRNOG00000054917">
    <property type="expression patterns" value="Expressed in frontal cortex and 6 other cell types or tissues"/>
</dbReference>
<dbReference type="ExpressionAtlas" id="Q7TN40">
    <property type="expression patterns" value="baseline and differential"/>
</dbReference>
<dbReference type="GO" id="GO:0005886">
    <property type="term" value="C:plasma membrane"/>
    <property type="evidence" value="ECO:0000318"/>
    <property type="project" value="GO_Central"/>
</dbReference>
<dbReference type="GO" id="GO:0004930">
    <property type="term" value="F:G protein-coupled receptor activity"/>
    <property type="evidence" value="ECO:0000318"/>
    <property type="project" value="GO_Central"/>
</dbReference>
<dbReference type="GO" id="GO:0007186">
    <property type="term" value="P:G protein-coupled receptor signaling pathway"/>
    <property type="evidence" value="ECO:0000318"/>
    <property type="project" value="GO_Central"/>
</dbReference>
<dbReference type="FunFam" id="1.20.1070.10:FF:000193">
    <property type="entry name" value="Mas-related G-protein coupled receptor member E"/>
    <property type="match status" value="1"/>
</dbReference>
<dbReference type="Gene3D" id="1.20.1070.10">
    <property type="entry name" value="Rhodopsin 7-helix transmembrane proteins"/>
    <property type="match status" value="1"/>
</dbReference>
<dbReference type="InterPro" id="IPR000276">
    <property type="entry name" value="GPCR_Rhodpsn"/>
</dbReference>
<dbReference type="InterPro" id="IPR017452">
    <property type="entry name" value="GPCR_Rhodpsn_7TM"/>
</dbReference>
<dbReference type="InterPro" id="IPR026230">
    <property type="entry name" value="MRGPCRE"/>
</dbReference>
<dbReference type="InterPro" id="IPR026234">
    <property type="entry name" value="MRGPCRFAMILY"/>
</dbReference>
<dbReference type="PANTHER" id="PTHR11334">
    <property type="entry name" value="MAS-RELATED G-PROTEIN COUPLED RECEPTOR"/>
    <property type="match status" value="1"/>
</dbReference>
<dbReference type="PANTHER" id="PTHR11334:SF26">
    <property type="entry name" value="MAS-RELATED G-PROTEIN COUPLED RECEPTOR MEMBER E"/>
    <property type="match status" value="1"/>
</dbReference>
<dbReference type="Pfam" id="PF00001">
    <property type="entry name" value="7tm_1"/>
    <property type="match status" value="1"/>
</dbReference>
<dbReference type="PRINTS" id="PR00237">
    <property type="entry name" value="GPCRRHODOPSN"/>
</dbReference>
<dbReference type="PRINTS" id="PR02111">
    <property type="entry name" value="MRGPCRE"/>
</dbReference>
<dbReference type="PRINTS" id="PR02108">
    <property type="entry name" value="MRGPCRFAMILY"/>
</dbReference>
<dbReference type="SUPFAM" id="SSF81321">
    <property type="entry name" value="Family A G protein-coupled receptor-like"/>
    <property type="match status" value="1"/>
</dbReference>
<dbReference type="PROSITE" id="PS50262">
    <property type="entry name" value="G_PROTEIN_RECEP_F1_2"/>
    <property type="match status" value="1"/>
</dbReference>
<keyword id="KW-1003">Cell membrane</keyword>
<keyword id="KW-0297">G-protein coupled receptor</keyword>
<keyword id="KW-0325">Glycoprotein</keyword>
<keyword id="KW-0472">Membrane</keyword>
<keyword id="KW-0675">Receptor</keyword>
<keyword id="KW-1185">Reference proteome</keyword>
<keyword id="KW-0807">Transducer</keyword>
<keyword id="KW-0812">Transmembrane</keyword>
<keyword id="KW-1133">Transmembrane helix</keyword>
<proteinExistence type="inferred from homology"/>
<organism>
    <name type="scientific">Rattus norvegicus</name>
    <name type="common">Rat</name>
    <dbReference type="NCBI Taxonomy" id="10116"/>
    <lineage>
        <taxon>Eukaryota</taxon>
        <taxon>Metazoa</taxon>
        <taxon>Chordata</taxon>
        <taxon>Craniata</taxon>
        <taxon>Vertebrata</taxon>
        <taxon>Euteleostomi</taxon>
        <taxon>Mammalia</taxon>
        <taxon>Eutheria</taxon>
        <taxon>Euarchontoglires</taxon>
        <taxon>Glires</taxon>
        <taxon>Rodentia</taxon>
        <taxon>Myomorpha</taxon>
        <taxon>Muroidea</taxon>
        <taxon>Muridae</taxon>
        <taxon>Murinae</taxon>
        <taxon>Rattus</taxon>
    </lineage>
</organism>
<evidence type="ECO:0000255" key="1"/>
<evidence type="ECO:0000255" key="2">
    <source>
        <dbReference type="PROSITE-ProRule" id="PRU00521"/>
    </source>
</evidence>